<name>HGS_MOUSE</name>
<feature type="chain" id="PRO_0000098709" description="Hepatocyte growth factor-regulated tyrosine kinase substrate">
    <location>
        <begin position="1"/>
        <end position="775"/>
    </location>
</feature>
<feature type="domain" description="VHS" evidence="6">
    <location>
        <begin position="15"/>
        <end position="143"/>
    </location>
</feature>
<feature type="domain" description="UIM" evidence="5">
    <location>
        <begin position="258"/>
        <end position="277"/>
    </location>
</feature>
<feature type="zinc finger region" description="FYVE-type" evidence="4">
    <location>
        <begin position="160"/>
        <end position="220"/>
    </location>
</feature>
<feature type="region of interest" description="Disordered" evidence="7">
    <location>
        <begin position="223"/>
        <end position="319"/>
    </location>
</feature>
<feature type="region of interest" description="Interaction with SNX1" evidence="1">
    <location>
        <begin position="225"/>
        <end position="541"/>
    </location>
</feature>
<feature type="region of interest" description="Disordered" evidence="7">
    <location>
        <begin position="338"/>
        <end position="405"/>
    </location>
</feature>
<feature type="region of interest" description="Interaction with SNAP25 and TRAK2" evidence="1">
    <location>
        <begin position="443"/>
        <end position="541"/>
    </location>
</feature>
<feature type="region of interest" description="Interaction with STAM" evidence="18">
    <location>
        <begin position="452"/>
        <end position="570"/>
    </location>
</feature>
<feature type="region of interest" description="Interaction with NF2" evidence="1">
    <location>
        <begin position="478"/>
        <end position="775"/>
    </location>
</feature>
<feature type="region of interest" description="Disordered" evidence="7">
    <location>
        <begin position="640"/>
        <end position="690"/>
    </location>
</feature>
<feature type="region of interest" description="Disordered" evidence="7">
    <location>
        <begin position="719"/>
        <end position="775"/>
    </location>
</feature>
<feature type="compositionally biased region" description="Polar residues" evidence="7">
    <location>
        <begin position="307"/>
        <end position="316"/>
    </location>
</feature>
<feature type="compositionally biased region" description="Low complexity" evidence="7">
    <location>
        <begin position="640"/>
        <end position="657"/>
    </location>
</feature>
<feature type="compositionally biased region" description="Polar residues" evidence="7">
    <location>
        <begin position="658"/>
        <end position="690"/>
    </location>
</feature>
<feature type="compositionally biased region" description="Pro residues" evidence="7">
    <location>
        <begin position="744"/>
        <end position="761"/>
    </location>
</feature>
<feature type="binding site" evidence="4">
    <location>
        <position position="166"/>
    </location>
    <ligand>
        <name>Zn(2+)</name>
        <dbReference type="ChEBI" id="CHEBI:29105"/>
        <label>1</label>
    </ligand>
</feature>
<feature type="binding site" evidence="4">
    <location>
        <position position="169"/>
    </location>
    <ligand>
        <name>Zn(2+)</name>
        <dbReference type="ChEBI" id="CHEBI:29105"/>
        <label>1</label>
    </ligand>
</feature>
<feature type="binding site" evidence="4">
    <location>
        <position position="182"/>
    </location>
    <ligand>
        <name>Zn(2+)</name>
        <dbReference type="ChEBI" id="CHEBI:29105"/>
        <label>2</label>
    </ligand>
</feature>
<feature type="binding site" evidence="4">
    <location>
        <position position="185"/>
    </location>
    <ligand>
        <name>Zn(2+)</name>
        <dbReference type="ChEBI" id="CHEBI:29105"/>
        <label>2</label>
    </ligand>
</feature>
<feature type="binding site" evidence="4">
    <location>
        <position position="190"/>
    </location>
    <ligand>
        <name>Zn(2+)</name>
        <dbReference type="ChEBI" id="CHEBI:29105"/>
        <label>1</label>
    </ligand>
</feature>
<feature type="binding site" evidence="4">
    <location>
        <position position="193"/>
    </location>
    <ligand>
        <name>Zn(2+)</name>
        <dbReference type="ChEBI" id="CHEBI:29105"/>
        <label>1</label>
    </ligand>
</feature>
<feature type="binding site" evidence="4">
    <location>
        <position position="212"/>
    </location>
    <ligand>
        <name>Zn(2+)</name>
        <dbReference type="ChEBI" id="CHEBI:29105"/>
        <label>2</label>
    </ligand>
</feature>
<feature type="binding site" evidence="4">
    <location>
        <position position="215"/>
    </location>
    <ligand>
        <name>Zn(2+)</name>
        <dbReference type="ChEBI" id="CHEBI:29105"/>
        <label>2</label>
    </ligand>
</feature>
<feature type="modified residue" description="N6-acetyllysine" evidence="2">
    <location>
        <position position="207"/>
    </location>
</feature>
<feature type="modified residue" description="Phosphotyrosine" evidence="21 23">
    <location>
        <position position="216"/>
    </location>
</feature>
<feature type="modified residue" description="Phosphotyrosine" evidence="22">
    <location>
        <position position="308"/>
    </location>
</feature>
<feature type="modified residue" description="Phosphotyrosine" evidence="14">
    <location>
        <position position="329"/>
    </location>
</feature>
<feature type="modified residue" description="Phosphotyrosine" evidence="14">
    <location>
        <position position="334"/>
    </location>
</feature>
<feature type="modified residue" description="N6-succinyllysine" evidence="24">
    <location>
        <position position="549"/>
    </location>
</feature>
<feature type="mutagenesis site" description="100-fold loss of affinity for PIP3 and accumulation in the cytosol." evidence="11">
    <original>R</original>
    <variation>A</variation>
    <location>
        <position position="183"/>
    </location>
</feature>
<feature type="mutagenesis site" description="Accumulation in proteinaceous aggregates devoid of membranes and no interaction with PI3P." evidence="11">
    <original>C</original>
    <variation>S</variation>
    <location>
        <position position="215"/>
    </location>
</feature>
<feature type="mutagenesis site" description="Loss of protein phosphorylation at Y-329 and Y-334; when associated with A-270." evidence="14">
    <original>L</original>
    <variation>A</variation>
    <location>
        <position position="269"/>
    </location>
</feature>
<feature type="mutagenesis site" description="Loss of protein phosphorylation at Y-329 and Y-334; when associated with A-269." evidence="12 14">
    <original>S</original>
    <variation>A</variation>
    <location>
        <position position="270"/>
    </location>
</feature>
<feature type="mutagenesis site" description="No interaction with ubiquitin." evidence="12 14">
    <original>S</original>
    <variation>E</variation>
    <location>
        <position position="270"/>
    </location>
</feature>
<feature type="mutagenesis site" description="No change in the phosphorylation level. Loss of protein phosphorylation; when associated with F-334." evidence="14">
    <original>Y</original>
    <variation>F</variation>
    <location>
        <position position="329"/>
    </location>
</feature>
<feature type="mutagenesis site" description="No change in the phosphorylation level. Loss of protein phosphorylation; when associated with F-329." evidence="14">
    <original>Y</original>
    <variation>F</variation>
    <location>
        <position position="334"/>
    </location>
</feature>
<feature type="sequence conflict" description="In Ref. 3; AAH03239." evidence="20" ref="3">
    <original>T</original>
    <variation>S</variation>
    <location>
        <position position="23"/>
    </location>
</feature>
<feature type="sequence conflict" description="In Ref. 2; BAC32676." evidence="20" ref="2">
    <original>P</original>
    <variation>S</variation>
    <location>
        <position position="584"/>
    </location>
</feature>
<gene>
    <name type="primary">Hgs</name>
    <name type="synonym">Hrs</name>
</gene>
<comment type="function">
    <text evidence="10">Involved in intracellular signal transduction mediated by cytokines and growth factors. When associated with STAM, it suppresses DNA signaling upon stimulation by IL-2 and GM-CSF. Could be a direct effector of PI3-kinase in vesicular pathway via early endosomes and may regulate trafficking to early and late endosomes by recruiting clathrin. May concentrate ubiquitinated receptors within clathrin-coated regions. Involved in down-regulation of receptor tyrosine kinase via multivesicular body (MVBs) when complexed with STAM (ESCRT-0 complex). The ESCRT-0 complex binds ubiquitin and acts as a sorting machinery that recognizes ubiquitinated receptors and transfers them to further sequential lysosomal sorting/trafficking processes. May contribute to the efficient recruitment of SMADs to the activin receptor complex. Involved in receptor recycling via its association with the CART complex, a multiprotein complex required for efficient transferrin receptor recycling but not for EGFR degradation.</text>
</comment>
<comment type="subunit">
    <text evidence="2 3 9 10 12 13 15 16 18">Component of the ESCRT-0 complex composed of STAM or STAM2 and HGS. Part of a complex at least composed of HSG, STAM2 (or probably STAM) and EPS15 (By similarity). Interacts with STAM (PubMed:19278655, PubMed:9407053). Interacts with STAM2 (PubMed:10651905). Interacts with EPS15; the interaction is direct, calcium-dependent and inhibited by SNAP25 (By similarity). Identified in a complex with STAM and LITAF (By similarity). Found in a complex with STAM and E3 ligase ITCH and DTX3L (By similarity). Interacts with E3 ligase DTX3L; the interaction brings together STAM and HSG, promotes their recruitment to early endosomes and decreases STAM and HGS ubiquitination by ITCH (By similarity). Interacts with NF2; the interaction is direct (By similarity). Interacts with ubiquitin; the interaction is direct (PubMed:11988743). Interacts with VPS37C (By similarity). Interacts with SMAD1, SMAD2 and SMAD3 (PubMed:11094085). Interacts with TSG101; the interaction mediates the association with the ESCRT-I complex (PubMed:12802020). Interacts with SNAP25; the interaction is direct and decreases with addition of increasing concentrations of free calcium (By similarity). Interacts with SNX1; the interaction is direct (By similarity). Component of a 550 kDa membrane complex at least composed of HGS and SNX1 but excluding EGFR (By similarity). Interacts with TRAK1 (By similarity). Interacts with TRAK2 (By similarity). Component of the CART complex, at least composed of ACTN4, HGS/HRS, MYO5B and TRIM3 (By similarity). Interacts with ARRDC3 (By similarity). Identified in a complex containing at least ARRDC4, AVPR2 and HGS (By similarity). Interacts (via UIM domain) with UBQLN1 (via ubiquitin-like domain) (PubMed:16159959). Interacts with LAPTM4B; promotes HGS ubiquitination (By similarity).</text>
</comment>
<comment type="interaction">
    <interactant intactId="EBI-2119135">
        <id>Q99LI8</id>
    </interactant>
    <interactant intactId="EBI-2119135">
        <id>Q99LI8</id>
        <label>Hgs</label>
    </interactant>
    <organismsDiffer>false</organismsDiffer>
    <experiments>2</experiments>
</comment>
<comment type="interaction">
    <interactant intactId="EBI-2119135">
        <id>Q99LI8</id>
    </interactant>
    <interactant intactId="EBI-309647">
        <id>P15209</id>
        <label>Ntrk2</label>
    </interactant>
    <organismsDiffer>false</organismsDiffer>
    <experiments>2</experiments>
</comment>
<comment type="interaction">
    <interactant intactId="EBI-2119135">
        <id>Q99LI8</id>
    </interactant>
    <interactant intactId="EBI-15880299">
        <id>O88689-1</id>
        <label>Pcdha4</label>
    </interactant>
    <organismsDiffer>false</organismsDiffer>
    <experiments>2</experiments>
</comment>
<comment type="interaction">
    <interactant intactId="EBI-2119135">
        <id>Q99LI8</id>
    </interactant>
    <interactant intactId="EBI-15763634">
        <id>Q92783-1</id>
        <label>STAM</label>
    </interactant>
    <organismsDiffer>true</organismsDiffer>
    <experiments>4</experiments>
</comment>
<comment type="interaction">
    <interactant intactId="EBI-2119135">
        <id>Q99LI8</id>
    </interactant>
    <interactant intactId="EBI-346882">
        <id>Q99816</id>
        <label>TSG101</label>
    </interactant>
    <organismsDiffer>true</organismsDiffer>
    <experiments>3</experiments>
</comment>
<comment type="subcellular location">
    <subcellularLocation>
        <location>Cytoplasm</location>
    </subcellularLocation>
    <subcellularLocation>
        <location>Early endosome membrane</location>
        <topology>Peripheral membrane protein</topology>
        <orientation>Cytoplasmic side</orientation>
    </subcellularLocation>
    <subcellularLocation>
        <location>Endosome</location>
        <location>Multivesicular body membrane</location>
        <topology>Peripheral membrane protein</topology>
    </subcellularLocation>
    <text evidence="2">Colocalizes with UBQLN1 in ubiquitin-rich cytoplasmic aggregates that are not endocytic compartments.</text>
</comment>
<comment type="tissue specificity">
    <text evidence="17 19">Ubiquitous expression in adult and fetal tissues with higher expression in testis.</text>
</comment>
<comment type="domain">
    <text evidence="1">Has a double-sided UIM that can bind 2 ubiquitin molecules, one on each side of the helix.</text>
</comment>
<comment type="domain">
    <text evidence="1">The FYVE-type zinc finger domain mediates interactions with phosphatidylinositol 3-phosphate in membranes of early endosomes and penetrates bilayers. The FYVE domain insertion into PtdIns(3)P-enriched membranes is substantially increased in acidic conditions (By similarity).</text>
</comment>
<comment type="PTM">
    <text evidence="14">Phosphorylated on Tyr-334. This phosphorylation occurs in response to EGF. A minor site of phosphorylation on Tyr-329 is detected. Protein phosphorylation may also be triggered in response to IL-2, GM-CSF and HGF.</text>
</comment>
<comment type="PTM">
    <text evidence="2">Ubiquitinated by ITCH.</text>
</comment>
<comment type="disruption phenotype">
    <text evidence="8 10">Mice show a defect in ventral folding morphogenesis, exhibiting two bilateral heart tubes and absence of foregut, and died around embryonic day 11. Significantly enlarged endosomes were also detected in cells of the endoderm.</text>
</comment>
<protein>
    <recommendedName>
        <fullName>Hepatocyte growth factor-regulated tyrosine kinase substrate</fullName>
    </recommendedName>
</protein>
<proteinExistence type="evidence at protein level"/>
<reference key="1">
    <citation type="journal article" date="1995" name="Mol. Cell. Biol.">
        <title>Growth factor-induced tyrosine phosphorylation of Hrs, a novel 115-kilodalton protein with a structurally-conserved putative zinc finger domain.</title>
        <authorList>
            <person name="Komada M."/>
            <person name="Kitamura N."/>
        </authorList>
    </citation>
    <scope>NUCLEOTIDE SEQUENCE [MRNA]</scope>
    <scope>TISSUE SPECIFICITY</scope>
    <scope>SUBCELLULAR LOCATION</scope>
</reference>
<reference key="2">
    <citation type="journal article" date="2005" name="Science">
        <title>The transcriptional landscape of the mammalian genome.</title>
        <authorList>
            <person name="Carninci P."/>
            <person name="Kasukawa T."/>
            <person name="Katayama S."/>
            <person name="Gough J."/>
            <person name="Frith M.C."/>
            <person name="Maeda N."/>
            <person name="Oyama R."/>
            <person name="Ravasi T."/>
            <person name="Lenhard B."/>
            <person name="Wells C."/>
            <person name="Kodzius R."/>
            <person name="Shimokawa K."/>
            <person name="Bajic V.B."/>
            <person name="Brenner S.E."/>
            <person name="Batalov S."/>
            <person name="Forrest A.R."/>
            <person name="Zavolan M."/>
            <person name="Davis M.J."/>
            <person name="Wilming L.G."/>
            <person name="Aidinis V."/>
            <person name="Allen J.E."/>
            <person name="Ambesi-Impiombato A."/>
            <person name="Apweiler R."/>
            <person name="Aturaliya R.N."/>
            <person name="Bailey T.L."/>
            <person name="Bansal M."/>
            <person name="Baxter L."/>
            <person name="Beisel K.W."/>
            <person name="Bersano T."/>
            <person name="Bono H."/>
            <person name="Chalk A.M."/>
            <person name="Chiu K.P."/>
            <person name="Choudhary V."/>
            <person name="Christoffels A."/>
            <person name="Clutterbuck D.R."/>
            <person name="Crowe M.L."/>
            <person name="Dalla E."/>
            <person name="Dalrymple B.P."/>
            <person name="de Bono B."/>
            <person name="Della Gatta G."/>
            <person name="di Bernardo D."/>
            <person name="Down T."/>
            <person name="Engstrom P."/>
            <person name="Fagiolini M."/>
            <person name="Faulkner G."/>
            <person name="Fletcher C.F."/>
            <person name="Fukushima T."/>
            <person name="Furuno M."/>
            <person name="Futaki S."/>
            <person name="Gariboldi M."/>
            <person name="Georgii-Hemming P."/>
            <person name="Gingeras T.R."/>
            <person name="Gojobori T."/>
            <person name="Green R.E."/>
            <person name="Gustincich S."/>
            <person name="Harbers M."/>
            <person name="Hayashi Y."/>
            <person name="Hensch T.K."/>
            <person name="Hirokawa N."/>
            <person name="Hill D."/>
            <person name="Huminiecki L."/>
            <person name="Iacono M."/>
            <person name="Ikeo K."/>
            <person name="Iwama A."/>
            <person name="Ishikawa T."/>
            <person name="Jakt M."/>
            <person name="Kanapin A."/>
            <person name="Katoh M."/>
            <person name="Kawasawa Y."/>
            <person name="Kelso J."/>
            <person name="Kitamura H."/>
            <person name="Kitano H."/>
            <person name="Kollias G."/>
            <person name="Krishnan S.P."/>
            <person name="Kruger A."/>
            <person name="Kummerfeld S.K."/>
            <person name="Kurochkin I.V."/>
            <person name="Lareau L.F."/>
            <person name="Lazarevic D."/>
            <person name="Lipovich L."/>
            <person name="Liu J."/>
            <person name="Liuni S."/>
            <person name="McWilliam S."/>
            <person name="Madan Babu M."/>
            <person name="Madera M."/>
            <person name="Marchionni L."/>
            <person name="Matsuda H."/>
            <person name="Matsuzawa S."/>
            <person name="Miki H."/>
            <person name="Mignone F."/>
            <person name="Miyake S."/>
            <person name="Morris K."/>
            <person name="Mottagui-Tabar S."/>
            <person name="Mulder N."/>
            <person name="Nakano N."/>
            <person name="Nakauchi H."/>
            <person name="Ng P."/>
            <person name="Nilsson R."/>
            <person name="Nishiguchi S."/>
            <person name="Nishikawa S."/>
            <person name="Nori F."/>
            <person name="Ohara O."/>
            <person name="Okazaki Y."/>
            <person name="Orlando V."/>
            <person name="Pang K.C."/>
            <person name="Pavan W.J."/>
            <person name="Pavesi G."/>
            <person name="Pesole G."/>
            <person name="Petrovsky N."/>
            <person name="Piazza S."/>
            <person name="Reed J."/>
            <person name="Reid J.F."/>
            <person name="Ring B.Z."/>
            <person name="Ringwald M."/>
            <person name="Rost B."/>
            <person name="Ruan Y."/>
            <person name="Salzberg S.L."/>
            <person name="Sandelin A."/>
            <person name="Schneider C."/>
            <person name="Schoenbach C."/>
            <person name="Sekiguchi K."/>
            <person name="Semple C.A."/>
            <person name="Seno S."/>
            <person name="Sessa L."/>
            <person name="Sheng Y."/>
            <person name="Shibata Y."/>
            <person name="Shimada H."/>
            <person name="Shimada K."/>
            <person name="Silva D."/>
            <person name="Sinclair B."/>
            <person name="Sperling S."/>
            <person name="Stupka E."/>
            <person name="Sugiura K."/>
            <person name="Sultana R."/>
            <person name="Takenaka Y."/>
            <person name="Taki K."/>
            <person name="Tammoja K."/>
            <person name="Tan S.L."/>
            <person name="Tang S."/>
            <person name="Taylor M.S."/>
            <person name="Tegner J."/>
            <person name="Teichmann S.A."/>
            <person name="Ueda H.R."/>
            <person name="van Nimwegen E."/>
            <person name="Verardo R."/>
            <person name="Wei C.L."/>
            <person name="Yagi K."/>
            <person name="Yamanishi H."/>
            <person name="Zabarovsky E."/>
            <person name="Zhu S."/>
            <person name="Zimmer A."/>
            <person name="Hide W."/>
            <person name="Bult C."/>
            <person name="Grimmond S.M."/>
            <person name="Teasdale R.D."/>
            <person name="Liu E.T."/>
            <person name="Brusic V."/>
            <person name="Quackenbush J."/>
            <person name="Wahlestedt C."/>
            <person name="Mattick J.S."/>
            <person name="Hume D.A."/>
            <person name="Kai C."/>
            <person name="Sasaki D."/>
            <person name="Tomaru Y."/>
            <person name="Fukuda S."/>
            <person name="Kanamori-Katayama M."/>
            <person name="Suzuki M."/>
            <person name="Aoki J."/>
            <person name="Arakawa T."/>
            <person name="Iida J."/>
            <person name="Imamura K."/>
            <person name="Itoh M."/>
            <person name="Kato T."/>
            <person name="Kawaji H."/>
            <person name="Kawagashira N."/>
            <person name="Kawashima T."/>
            <person name="Kojima M."/>
            <person name="Kondo S."/>
            <person name="Konno H."/>
            <person name="Nakano K."/>
            <person name="Ninomiya N."/>
            <person name="Nishio T."/>
            <person name="Okada M."/>
            <person name="Plessy C."/>
            <person name="Shibata K."/>
            <person name="Shiraki T."/>
            <person name="Suzuki S."/>
            <person name="Tagami M."/>
            <person name="Waki K."/>
            <person name="Watahiki A."/>
            <person name="Okamura-Oho Y."/>
            <person name="Suzuki H."/>
            <person name="Kawai J."/>
            <person name="Hayashizaki Y."/>
        </authorList>
    </citation>
    <scope>NUCLEOTIDE SEQUENCE [LARGE SCALE MRNA]</scope>
    <source>
        <strain>C57BL/6J</strain>
        <tissue>Corpora quadrigemina</tissue>
    </source>
</reference>
<reference key="3">
    <citation type="journal article" date="2004" name="Genome Res.">
        <title>The status, quality, and expansion of the NIH full-length cDNA project: the Mammalian Gene Collection (MGC).</title>
        <authorList>
            <consortium name="The MGC Project Team"/>
        </authorList>
    </citation>
    <scope>NUCLEOTIDE SEQUENCE [LARGE SCALE MRNA]</scope>
    <source>
        <strain>FVB/N</strain>
        <tissue>Mammary tumor</tissue>
    </source>
</reference>
<reference key="4">
    <citation type="journal article" date="1997" name="J. Biol. Chem.">
        <title>Hrs is associated with STAM, a signal-transducing adaptor molecule. Its suppressive effect on cytokine-induced cell growth.</title>
        <authorList>
            <person name="Asao H."/>
            <person name="Sasaki Y."/>
            <person name="Arita T."/>
            <person name="Tanaka N."/>
            <person name="Endo K."/>
            <person name="Kasai H."/>
            <person name="Takeshita T."/>
            <person name="Endo Y."/>
            <person name="Fujita T."/>
            <person name="Sugamura K."/>
        </authorList>
    </citation>
    <scope>INTERACTION WITH STAM</scope>
    <scope>DOMAIN</scope>
</reference>
<reference key="5">
    <citation type="journal article" date="1998" name="Gene">
        <title>Human Hrs, a tyrosine kinase substrate in growth factor-stimulated cells: cDNA cloning and mapping of the gene to chromosome 17.</title>
        <authorList>
            <person name="Lu L."/>
            <person name="Komada M."/>
            <person name="Kitamura N."/>
        </authorList>
    </citation>
    <scope>TISSUE SPECIFICITY</scope>
</reference>
<reference key="6">
    <citation type="journal article" date="1999" name="Genes Dev.">
        <title>Hrs, a FYVE finger protein localized to early endosomes, is implicated in vesicular traffic and required for ventral folding morphogenesis.</title>
        <authorList>
            <person name="Komada M."/>
            <person name="Soriano P."/>
        </authorList>
    </citation>
    <scope>DISRUPTION PHENOTYPE</scope>
</reference>
<reference key="7">
    <citation type="journal article" date="2000" name="Genes Cells">
        <title>A hrs binding protein having a Src homology 3 domain is involved in intracellular degradation of growth factors and their receptors.</title>
        <authorList>
            <person name="Takata H."/>
            <person name="Kato M."/>
            <person name="Denda K."/>
            <person name="Kitamura N."/>
        </authorList>
    </citation>
    <scope>INTERACTION WITH STAM2</scope>
    <scope>SUBCELLULAR LOCATION</scope>
</reference>
<reference key="8">
    <citation type="journal article" date="2000" name="Mol. Cell. Biol.">
        <title>Hgs (Hrs), a FYVE domain protein, is involved in Smad signaling through cooperation with SARA.</title>
        <authorList>
            <person name="Miura S."/>
            <person name="Takeshita T."/>
            <person name="Asao H."/>
            <person name="Kimura Y."/>
            <person name="Murata K."/>
            <person name="Sasaki Y."/>
            <person name="Hanai J."/>
            <person name="Beppu H."/>
            <person name="Tsukazaki T."/>
            <person name="Wrana J.L."/>
            <person name="Miyazono K."/>
            <person name="Sugamura K."/>
        </authorList>
    </citation>
    <scope>INTERACTION WITH SMAD1; SMAD2 AND SMAD3</scope>
    <scope>DISRUPTION PHENOTYPE</scope>
    <scope>FUNCTION</scope>
</reference>
<reference key="9">
    <citation type="journal article" date="2001" name="J. Cell Sci.">
        <title>FYVE and coiled-coil domains determine the specific localisation of Hrs to early endosomes.</title>
        <authorList>
            <person name="Raiborg C."/>
            <person name="Bremnes B."/>
            <person name="Mehlum A."/>
            <person name="Gillooly D.J."/>
            <person name="D'Arrigo A."/>
            <person name="Stang E."/>
            <person name="Stenmark H."/>
        </authorList>
    </citation>
    <scope>MUTAGENESIS OF ARG-183 AND CYS-215</scope>
    <scope>SUBCELLULAR LOCATION</scope>
</reference>
<reference key="10">
    <citation type="journal article" date="2002" name="Nat. Cell Biol.">
        <title>Hrs sorts ubiquitinated proteins into clathrin-coated microdomains of early endosomes.</title>
        <authorList>
            <person name="Raiborg C."/>
            <person name="Bache K.G."/>
            <person name="Gillooly D.J."/>
            <person name="Madshus I.H."/>
            <person name="Stang E."/>
            <person name="Stenmark H."/>
        </authorList>
    </citation>
    <scope>INTERACTION WITH UBIQUITIN</scope>
    <scope>MUTAGENESIS OF SER-270</scope>
</reference>
<reference key="11">
    <citation type="journal article" date="2003" name="J. Cell Sci.">
        <title>The UIM domain of Hrs couples receptor sorting to vesicle formation.</title>
        <authorList>
            <person name="Urbe S."/>
            <person name="Sachse M."/>
            <person name="Row P.E."/>
            <person name="Preisinger C."/>
            <person name="Barr F.A."/>
            <person name="Strous G."/>
            <person name="Klumperman J."/>
            <person name="Clague M.J."/>
        </authorList>
    </citation>
    <scope>PHOSPHORYLATION AT TYR-329 AND TYR-334</scope>
    <scope>IDENTIFICATION BY MASS SPECTROMETRY</scope>
    <scope>MUTAGENESIS OF LEU-269; SER-270; TYR-329 AND TYR-334</scope>
    <scope>SUBCELLULAR LOCATION</scope>
</reference>
<reference key="12">
    <citation type="journal article" date="2003" name="Proc. Natl. Acad. Sci. U.S.A.">
        <title>TSG101 interaction with HRS mediates endosomal trafficking and receptor down-regulation.</title>
        <authorList>
            <person name="Lu Q."/>
            <person name="Hope L.W."/>
            <person name="Brasch M."/>
            <person name="Reinhard C."/>
            <person name="Cohen S.N."/>
        </authorList>
    </citation>
    <scope>INTERACTION WITH TSG101</scope>
</reference>
<reference key="13">
    <citation type="journal article" date="2005" name="J. Cell Sci.">
        <title>Ubiquilin recruits Eps15 into ubiquitin-rich cytoplasmic aggregates via a UIM-UBL interaction.</title>
        <authorList>
            <person name="Regan-Klapisz E."/>
            <person name="Sorokina I."/>
            <person name="Voortman J."/>
            <person name="de Keizer P."/>
            <person name="Roovers R.C."/>
            <person name="Verheesen P."/>
            <person name="Urbe S."/>
            <person name="Fallon L."/>
            <person name="Fon E.A."/>
            <person name="Verkleij A."/>
            <person name="Benmerah A."/>
            <person name="van Bergen en Henegouwen P.M."/>
        </authorList>
    </citation>
    <scope>INTERACTION WITH UBQLN1</scope>
</reference>
<reference key="14">
    <citation type="journal article" date="2005" name="Nat. Biotechnol.">
        <title>Immunoaffinity profiling of tyrosine phosphorylation in cancer cells.</title>
        <authorList>
            <person name="Rush J."/>
            <person name="Moritz A."/>
            <person name="Lee K.A."/>
            <person name="Guo A."/>
            <person name="Goss V.L."/>
            <person name="Spek E.J."/>
            <person name="Zhang H."/>
            <person name="Zha X.-M."/>
            <person name="Polakiewicz R.D."/>
            <person name="Comb M.J."/>
        </authorList>
    </citation>
    <scope>PHOSPHORYLATION [LARGE SCALE ANALYSIS] AT TYR-216</scope>
    <scope>IDENTIFICATION BY MASS SPECTROMETRY [LARGE SCALE ANALYSIS]</scope>
</reference>
<reference key="15">
    <citation type="journal article" date="2007" name="J. Immunol.">
        <title>Quantitative time-resolved phosphoproteomic analysis of mast cell signaling.</title>
        <authorList>
            <person name="Cao L."/>
            <person name="Yu K."/>
            <person name="Banh C."/>
            <person name="Nguyen V."/>
            <person name="Ritz A."/>
            <person name="Raphael B.J."/>
            <person name="Kawakami Y."/>
            <person name="Kawakami T."/>
            <person name="Salomon A.R."/>
        </authorList>
    </citation>
    <scope>PHOSPHORYLATION [LARGE SCALE ANALYSIS] AT TYR-308</scope>
    <scope>IDENTIFICATION BY MASS SPECTROMETRY [LARGE SCALE ANALYSIS]</scope>
    <source>
        <tissue>Mast cell</tissue>
    </source>
</reference>
<reference key="16">
    <citation type="journal article" date="2008" name="J. Proteome Res.">
        <title>Large-scale identification and evolution indexing of tyrosine phosphorylation sites from murine brain.</title>
        <authorList>
            <person name="Ballif B.A."/>
            <person name="Carey G.R."/>
            <person name="Sunyaev S.R."/>
            <person name="Gygi S.P."/>
        </authorList>
    </citation>
    <scope>PHOSPHORYLATION [LARGE SCALE ANALYSIS] AT TYR-216</scope>
    <scope>IDENTIFICATION BY MASS SPECTROMETRY [LARGE SCALE ANALYSIS]</scope>
    <source>
        <tissue>Brain</tissue>
    </source>
</reference>
<reference key="17">
    <citation type="journal article" date="2009" name="Structure">
        <title>Hybrid structural model of the complete human ESCRT-0 complex.</title>
        <authorList>
            <person name="Ren X."/>
            <person name="Kloer D.P."/>
            <person name="Kim Y.C."/>
            <person name="Ghirlando R."/>
            <person name="Saidi L.F."/>
            <person name="Hummer G."/>
            <person name="Hurley J.H."/>
        </authorList>
    </citation>
    <scope>INTERACTION WITH STAM</scope>
</reference>
<reference key="18">
    <citation type="journal article" date="2010" name="Cell">
        <title>A tissue-specific atlas of mouse protein phosphorylation and expression.</title>
        <authorList>
            <person name="Huttlin E.L."/>
            <person name="Jedrychowski M.P."/>
            <person name="Elias J.E."/>
            <person name="Goswami T."/>
            <person name="Rad R."/>
            <person name="Beausoleil S.A."/>
            <person name="Villen J."/>
            <person name="Haas W."/>
            <person name="Sowa M.E."/>
            <person name="Gygi S.P."/>
        </authorList>
    </citation>
    <scope>IDENTIFICATION BY MASS SPECTROMETRY [LARGE SCALE ANALYSIS]</scope>
    <source>
        <tissue>Brain</tissue>
        <tissue>Brown adipose tissue</tissue>
        <tissue>Kidney</tissue>
        <tissue>Liver</tissue>
        <tissue>Lung</tissue>
        <tissue>Pancreas</tissue>
        <tissue>Spleen</tissue>
        <tissue>Testis</tissue>
    </source>
</reference>
<reference key="19">
    <citation type="journal article" date="2013" name="Mol. Cell">
        <title>SIRT5-mediated lysine desuccinylation impacts diverse metabolic pathways.</title>
        <authorList>
            <person name="Park J."/>
            <person name="Chen Y."/>
            <person name="Tishkoff D.X."/>
            <person name="Peng C."/>
            <person name="Tan M."/>
            <person name="Dai L."/>
            <person name="Xie Z."/>
            <person name="Zhang Y."/>
            <person name="Zwaans B.M."/>
            <person name="Skinner M.E."/>
            <person name="Lombard D.B."/>
            <person name="Zhao Y."/>
        </authorList>
    </citation>
    <scope>SUCCINYLATION [LARGE SCALE ANALYSIS] AT LYS-549</scope>
    <scope>IDENTIFICATION BY MASS SPECTROMETRY [LARGE SCALE ANALYSIS]</scope>
    <source>
        <tissue>Embryonic fibroblast</tissue>
    </source>
</reference>
<accession>Q99LI8</accession>
<accession>Q61691</accession>
<accession>Q8BQW3</accession>
<sequence length="775" mass="86015">MGRGSGTFERLLDKATSQLLLETDWESILQICDLIRQGDTQAKYAVNSIKKKVNDKNPHVALYALEVMESVVKNCGQTVHDEVANKQTMEELKELLKRQVEVNVRNKILYLIQAWAHAFRNEPKYKVVQDTYQIMKVEGHVFPEFKESDAMFAAERAPDWVDAEECHRCRVQFGVVTRKHHCRACGQIFCGKCSSKYSTIPKFGIEKEVRVCEPCYEQLNKKAEGKASSTTELPPEYLTSPLSQQSQLPPKRDETALQEEEELQLALALSQSEAEEKERMRQKTTYTAHPKAEPTPLASSAPPAGSLYSSPVNSSAPLAEDIDPELARYLNRNYWEKKQEEARKSPTPSAPVPLTEPAAQPGEGHTAPNSMAEAPLPETDSQPITPCSGPFSEYQNGESEESHEQFLKALQNAVSTFVNRMKSNHMRGRSITNDSAVLSLFQSINTMHPQLLELLNQLDERRLYYEGLQDKLAQIRDARGALSALREEHREKLRRAAEEAERQRQIQLAQKLEIMRQKKQEYLEVQRQLAIQRLQEQEKERQMRLEQQKQTVQMRAQMPAFPLPYAQLQAMPTAGGVLYQPSGPTSFPATFSPAGSVEGSPMHGVYMSQPAPATGPYPSMPGTTADPSMVSAYMYPTGAPGAQAAPQAQAGPTTSPAYSSYQPTPTPGYQSVASQAPQSLPAISQPPQTSNIGYMGSQPMSMGYQPYNMQNLMTALPGQDASLPAQQPYIPGQQPLYQQMAPSTGPPQQQPPVAQPAPTQGPPAQGSEAQLISFD</sequence>
<organism>
    <name type="scientific">Mus musculus</name>
    <name type="common">Mouse</name>
    <dbReference type="NCBI Taxonomy" id="10090"/>
    <lineage>
        <taxon>Eukaryota</taxon>
        <taxon>Metazoa</taxon>
        <taxon>Chordata</taxon>
        <taxon>Craniata</taxon>
        <taxon>Vertebrata</taxon>
        <taxon>Euteleostomi</taxon>
        <taxon>Mammalia</taxon>
        <taxon>Eutheria</taxon>
        <taxon>Euarchontoglires</taxon>
        <taxon>Glires</taxon>
        <taxon>Rodentia</taxon>
        <taxon>Myomorpha</taxon>
        <taxon>Muroidea</taxon>
        <taxon>Muridae</taxon>
        <taxon>Murinae</taxon>
        <taxon>Mus</taxon>
        <taxon>Mus</taxon>
    </lineage>
</organism>
<dbReference type="EMBL" id="D50050">
    <property type="protein sequence ID" value="BAA08768.1"/>
    <property type="molecule type" value="mRNA"/>
</dbReference>
<dbReference type="EMBL" id="AK046299">
    <property type="protein sequence ID" value="BAC32676.1"/>
    <property type="molecule type" value="mRNA"/>
</dbReference>
<dbReference type="EMBL" id="BC003239">
    <property type="protein sequence ID" value="AAH03239.1"/>
    <property type="molecule type" value="mRNA"/>
</dbReference>
<dbReference type="CCDS" id="CCDS88297.1"/>
<dbReference type="PIR" id="I49759">
    <property type="entry name" value="I49759"/>
</dbReference>
<dbReference type="RefSeq" id="NP_001152800.1">
    <property type="nucleotide sequence ID" value="NM_001159328.1"/>
</dbReference>
<dbReference type="RefSeq" id="NP_032270.3">
    <property type="nucleotide sequence ID" value="NM_008244.3"/>
</dbReference>
<dbReference type="SMR" id="Q99LI8"/>
<dbReference type="BioGRID" id="200296">
    <property type="interactions" value="33"/>
</dbReference>
<dbReference type="DIP" id="DIP-29102N"/>
<dbReference type="FunCoup" id="Q99LI8">
    <property type="interactions" value="3296"/>
</dbReference>
<dbReference type="IntAct" id="Q99LI8">
    <property type="interactions" value="12"/>
</dbReference>
<dbReference type="MINT" id="Q99LI8"/>
<dbReference type="STRING" id="10090.ENSMUSP00000101809"/>
<dbReference type="GlyGen" id="Q99LI8">
    <property type="glycosylation" value="9 sites, 1 N-linked glycan (1 site), 1 O-linked glycan (2 sites)"/>
</dbReference>
<dbReference type="iPTMnet" id="Q99LI8"/>
<dbReference type="PhosphoSitePlus" id="Q99LI8"/>
<dbReference type="SwissPalm" id="Q99LI8"/>
<dbReference type="PaxDb" id="10090-ENSMUSP00000026900"/>
<dbReference type="ProteomicsDB" id="273105"/>
<dbReference type="Pumba" id="Q99LI8"/>
<dbReference type="Antibodypedia" id="1403">
    <property type="antibodies" value="564 antibodies from 39 providers"/>
</dbReference>
<dbReference type="DNASU" id="15239"/>
<dbReference type="Ensembl" id="ENSMUST00000106205.9">
    <property type="protein sequence ID" value="ENSMUSP00000101811.3"/>
    <property type="gene ID" value="ENSMUSG00000025793.18"/>
</dbReference>
<dbReference type="GeneID" id="15239"/>
<dbReference type="KEGG" id="mmu:15239"/>
<dbReference type="UCSC" id="uc007msx.2">
    <property type="organism name" value="mouse"/>
</dbReference>
<dbReference type="AGR" id="MGI:104681"/>
<dbReference type="CTD" id="9146"/>
<dbReference type="MGI" id="MGI:104681">
    <property type="gene designation" value="Hgs"/>
</dbReference>
<dbReference type="VEuPathDB" id="HostDB:ENSMUSG00000025793"/>
<dbReference type="eggNOG" id="KOG1818">
    <property type="taxonomic scope" value="Eukaryota"/>
</dbReference>
<dbReference type="GeneTree" id="ENSGT00940000158297"/>
<dbReference type="InParanoid" id="Q99LI8"/>
<dbReference type="OrthoDB" id="957735at2759"/>
<dbReference type="Reactome" id="R-MMU-182971">
    <property type="pathway name" value="EGFR downregulation"/>
</dbReference>
<dbReference type="Reactome" id="R-MMU-432720">
    <property type="pathway name" value="Lysosome Vesicle Biogenesis"/>
</dbReference>
<dbReference type="Reactome" id="R-MMU-5689880">
    <property type="pathway name" value="Ub-specific processing proteases"/>
</dbReference>
<dbReference type="Reactome" id="R-MMU-6807004">
    <property type="pathway name" value="Negative regulation of MET activity"/>
</dbReference>
<dbReference type="Reactome" id="R-MMU-8856825">
    <property type="pathway name" value="Cargo recognition for clathrin-mediated endocytosis"/>
</dbReference>
<dbReference type="Reactome" id="R-MMU-8856828">
    <property type="pathway name" value="Clathrin-mediated endocytosis"/>
</dbReference>
<dbReference type="Reactome" id="R-MMU-9013420">
    <property type="pathway name" value="RHOU GTPase cycle"/>
</dbReference>
<dbReference type="Reactome" id="R-MMU-917729">
    <property type="pathway name" value="Endosomal Sorting Complex Required For Transport (ESCRT)"/>
</dbReference>
<dbReference type="Reactome" id="R-MMU-9706019">
    <property type="pathway name" value="RHOBTB3 ATPase cycle"/>
</dbReference>
<dbReference type="BioGRID-ORCS" id="15239">
    <property type="hits" value="36 hits in 82 CRISPR screens"/>
</dbReference>
<dbReference type="ChiTaRS" id="Hgs">
    <property type="organism name" value="mouse"/>
</dbReference>
<dbReference type="PRO" id="PR:Q99LI8"/>
<dbReference type="Proteomes" id="UP000000589">
    <property type="component" value="Chromosome 11"/>
</dbReference>
<dbReference type="RNAct" id="Q99LI8">
    <property type="molecule type" value="protein"/>
</dbReference>
<dbReference type="Bgee" id="ENSMUSG00000025793">
    <property type="expression patterns" value="Expressed in ileal epithelium and 247 other cell types or tissues"/>
</dbReference>
<dbReference type="ExpressionAtlas" id="Q99LI8">
    <property type="expression patterns" value="baseline and differential"/>
</dbReference>
<dbReference type="GO" id="GO:0005737">
    <property type="term" value="C:cytoplasm"/>
    <property type="evidence" value="ECO:0000314"/>
    <property type="project" value="MGI"/>
</dbReference>
<dbReference type="GO" id="GO:0031901">
    <property type="term" value="C:early endosome membrane"/>
    <property type="evidence" value="ECO:0007669"/>
    <property type="project" value="UniProtKB-SubCell"/>
</dbReference>
<dbReference type="GO" id="GO:0032585">
    <property type="term" value="C:multivesicular body membrane"/>
    <property type="evidence" value="ECO:0007669"/>
    <property type="project" value="UniProtKB-SubCell"/>
</dbReference>
<dbReference type="GO" id="GO:0042802">
    <property type="term" value="F:identical protein binding"/>
    <property type="evidence" value="ECO:0000353"/>
    <property type="project" value="IntAct"/>
</dbReference>
<dbReference type="GO" id="GO:0035091">
    <property type="term" value="F:phosphatidylinositol binding"/>
    <property type="evidence" value="ECO:0007669"/>
    <property type="project" value="InterPro"/>
</dbReference>
<dbReference type="GO" id="GO:0043130">
    <property type="term" value="F:ubiquitin binding"/>
    <property type="evidence" value="ECO:0007669"/>
    <property type="project" value="InterPro"/>
</dbReference>
<dbReference type="GO" id="GO:0140036">
    <property type="term" value="F:ubiquitin-modified protein reader activity"/>
    <property type="evidence" value="ECO:0000314"/>
    <property type="project" value="UniProtKB"/>
</dbReference>
<dbReference type="GO" id="GO:0008270">
    <property type="term" value="F:zinc ion binding"/>
    <property type="evidence" value="ECO:0007669"/>
    <property type="project" value="UniProtKB-KW"/>
</dbReference>
<dbReference type="GO" id="GO:0015031">
    <property type="term" value="P:protein transport"/>
    <property type="evidence" value="ECO:0007669"/>
    <property type="project" value="UniProtKB-KW"/>
</dbReference>
<dbReference type="CDD" id="cd15720">
    <property type="entry name" value="FYVE_Hrs"/>
    <property type="match status" value="1"/>
</dbReference>
<dbReference type="CDD" id="cd21387">
    <property type="entry name" value="GAT_Hrs"/>
    <property type="match status" value="1"/>
</dbReference>
<dbReference type="CDD" id="cd03569">
    <property type="entry name" value="VHS_Hrs"/>
    <property type="match status" value="1"/>
</dbReference>
<dbReference type="FunFam" id="1.20.5.1940:FF:000003">
    <property type="entry name" value="Hepatocyte growth factor-regulated tyrosine kinase substrate"/>
    <property type="match status" value="1"/>
</dbReference>
<dbReference type="FunFam" id="1.25.40.90:FF:000014">
    <property type="entry name" value="Hepatocyte growth factor-regulated tyrosine kinase substrate"/>
    <property type="match status" value="1"/>
</dbReference>
<dbReference type="FunFam" id="3.30.40.10:FF:000028">
    <property type="entry name" value="Putative hepatocyte growth factor-regulated tyrosine kinase substrate"/>
    <property type="match status" value="1"/>
</dbReference>
<dbReference type="Gene3D" id="1.20.5.1940">
    <property type="match status" value="1"/>
</dbReference>
<dbReference type="Gene3D" id="1.25.40.90">
    <property type="match status" value="1"/>
</dbReference>
<dbReference type="Gene3D" id="3.30.40.10">
    <property type="entry name" value="Zinc/RING finger domain, C3HC4 (zinc finger)"/>
    <property type="match status" value="1"/>
</dbReference>
<dbReference type="InterPro" id="IPR008942">
    <property type="entry name" value="ENTH_VHS"/>
</dbReference>
<dbReference type="InterPro" id="IPR017073">
    <property type="entry name" value="HGS/VPS27"/>
</dbReference>
<dbReference type="InterPro" id="IPR024641">
    <property type="entry name" value="HRS_helical"/>
</dbReference>
<dbReference type="InterPro" id="IPR003903">
    <property type="entry name" value="UIM_dom"/>
</dbReference>
<dbReference type="InterPro" id="IPR002014">
    <property type="entry name" value="VHS_dom"/>
</dbReference>
<dbReference type="InterPro" id="IPR000306">
    <property type="entry name" value="Znf_FYVE"/>
</dbReference>
<dbReference type="InterPro" id="IPR017455">
    <property type="entry name" value="Znf_FYVE-rel"/>
</dbReference>
<dbReference type="InterPro" id="IPR011011">
    <property type="entry name" value="Znf_FYVE_PHD"/>
</dbReference>
<dbReference type="InterPro" id="IPR013083">
    <property type="entry name" value="Znf_RING/FYVE/PHD"/>
</dbReference>
<dbReference type="PANTHER" id="PTHR46275">
    <property type="entry name" value="HEPATOCYTE GROWTH FACTOR-REGULATED TYROSINE KINASE SUBSTRATE"/>
    <property type="match status" value="1"/>
</dbReference>
<dbReference type="PANTHER" id="PTHR46275:SF1">
    <property type="entry name" value="HEPATOCYTE GROWTH FACTOR-REGULATED TYROSINE KINASE SUBSTRATE"/>
    <property type="match status" value="1"/>
</dbReference>
<dbReference type="Pfam" id="PF01363">
    <property type="entry name" value="FYVE"/>
    <property type="match status" value="1"/>
</dbReference>
<dbReference type="Pfam" id="PF12210">
    <property type="entry name" value="Hrs_helical"/>
    <property type="match status" value="1"/>
</dbReference>
<dbReference type="Pfam" id="PF00790">
    <property type="entry name" value="VHS"/>
    <property type="match status" value="1"/>
</dbReference>
<dbReference type="PIRSF" id="PIRSF036956">
    <property type="entry name" value="Hrs_Vps27"/>
    <property type="match status" value="1"/>
</dbReference>
<dbReference type="SMART" id="SM00064">
    <property type="entry name" value="FYVE"/>
    <property type="match status" value="1"/>
</dbReference>
<dbReference type="SMART" id="SM00288">
    <property type="entry name" value="VHS"/>
    <property type="match status" value="1"/>
</dbReference>
<dbReference type="SUPFAM" id="SSF48464">
    <property type="entry name" value="ENTH/VHS domain"/>
    <property type="match status" value="1"/>
</dbReference>
<dbReference type="SUPFAM" id="SSF57903">
    <property type="entry name" value="FYVE/PHD zinc finger"/>
    <property type="match status" value="1"/>
</dbReference>
<dbReference type="PROSITE" id="PS50330">
    <property type="entry name" value="UIM"/>
    <property type="match status" value="1"/>
</dbReference>
<dbReference type="PROSITE" id="PS50179">
    <property type="entry name" value="VHS"/>
    <property type="match status" value="1"/>
</dbReference>
<dbReference type="PROSITE" id="PS50178">
    <property type="entry name" value="ZF_FYVE"/>
    <property type="match status" value="1"/>
</dbReference>
<evidence type="ECO:0000250" key="1"/>
<evidence type="ECO:0000250" key="2">
    <source>
        <dbReference type="UniProtKB" id="O14964"/>
    </source>
</evidence>
<evidence type="ECO:0000250" key="3">
    <source>
        <dbReference type="UniProtKB" id="Q9JJ50"/>
    </source>
</evidence>
<evidence type="ECO:0000255" key="4">
    <source>
        <dbReference type="PROSITE-ProRule" id="PRU00091"/>
    </source>
</evidence>
<evidence type="ECO:0000255" key="5">
    <source>
        <dbReference type="PROSITE-ProRule" id="PRU00213"/>
    </source>
</evidence>
<evidence type="ECO:0000255" key="6">
    <source>
        <dbReference type="PROSITE-ProRule" id="PRU00218"/>
    </source>
</evidence>
<evidence type="ECO:0000256" key="7">
    <source>
        <dbReference type="SAM" id="MobiDB-lite"/>
    </source>
</evidence>
<evidence type="ECO:0000269" key="8">
    <source>
    </source>
</evidence>
<evidence type="ECO:0000269" key="9">
    <source>
    </source>
</evidence>
<evidence type="ECO:0000269" key="10">
    <source>
    </source>
</evidence>
<evidence type="ECO:0000269" key="11">
    <source>
    </source>
</evidence>
<evidence type="ECO:0000269" key="12">
    <source>
    </source>
</evidence>
<evidence type="ECO:0000269" key="13">
    <source>
    </source>
</evidence>
<evidence type="ECO:0000269" key="14">
    <source>
    </source>
</evidence>
<evidence type="ECO:0000269" key="15">
    <source>
    </source>
</evidence>
<evidence type="ECO:0000269" key="16">
    <source>
    </source>
</evidence>
<evidence type="ECO:0000269" key="17">
    <source>
    </source>
</evidence>
<evidence type="ECO:0000269" key="18">
    <source>
    </source>
</evidence>
<evidence type="ECO:0000269" key="19">
    <source>
    </source>
</evidence>
<evidence type="ECO:0000305" key="20"/>
<evidence type="ECO:0007744" key="21">
    <source>
    </source>
</evidence>
<evidence type="ECO:0007744" key="22">
    <source>
    </source>
</evidence>
<evidence type="ECO:0007744" key="23">
    <source>
    </source>
</evidence>
<evidence type="ECO:0007744" key="24">
    <source>
    </source>
</evidence>
<keyword id="KW-0007">Acetylation</keyword>
<keyword id="KW-0963">Cytoplasm</keyword>
<keyword id="KW-0967">Endosome</keyword>
<keyword id="KW-0472">Membrane</keyword>
<keyword id="KW-0479">Metal-binding</keyword>
<keyword id="KW-0597">Phosphoprotein</keyword>
<keyword id="KW-0653">Protein transport</keyword>
<keyword id="KW-1185">Reference proteome</keyword>
<keyword id="KW-0813">Transport</keyword>
<keyword id="KW-0832">Ubl conjugation</keyword>
<keyword id="KW-0862">Zinc</keyword>
<keyword id="KW-0863">Zinc-finger</keyword>